<feature type="chain" id="PRO_1000061376" description="Phycocyanobilin:ferredoxin oxidoreductase">
    <location>
        <begin position="1"/>
        <end position="248"/>
    </location>
</feature>
<keyword id="KW-0560">Oxidoreductase</keyword>
<sequence>MSSSTRVGLKEQLHPLIRDLATGIEATWQRWLNLEPYAAMPADLGYIEGKLEGERLQIENRCYQSREFRKLHLELARVGNNLDILHCVLFPRTTFDLPMFGADLVGGRGQISAAIVDLSPTTIARELSNDYIAGLTALPNPTFQGLRELPTWGDIFSSFCLFIRPGSPEEEAAFLDRALGFLQVHCQQAAAATALTDPEAIATVLEQQRYYCEQQRRNDKTRRVLEKAFGDDWADRYMTTMLFDLPSD</sequence>
<reference key="1">
    <citation type="journal article" date="2007" name="Photosyn. Res.">
        <title>Complete nucleotide sequence of the freshwater unicellular cyanobacterium Synechococcus elongatus PCC 6301 chromosome: gene content and organization.</title>
        <authorList>
            <person name="Sugita C."/>
            <person name="Ogata K."/>
            <person name="Shikata M."/>
            <person name="Jikuya H."/>
            <person name="Takano J."/>
            <person name="Furumichi M."/>
            <person name="Kanehisa M."/>
            <person name="Omata T."/>
            <person name="Sugiura M."/>
            <person name="Sugita M."/>
        </authorList>
    </citation>
    <scope>NUCLEOTIDE SEQUENCE [LARGE SCALE GENOMIC DNA]</scope>
    <source>
        <strain>ATCC 27144 / PCC 6301 / SAUG 1402/1</strain>
    </source>
</reference>
<protein>
    <recommendedName>
        <fullName evidence="1">Phycocyanobilin:ferredoxin oxidoreductase</fullName>
        <ecNumber evidence="1">1.3.7.5</ecNumber>
    </recommendedName>
</protein>
<name>PCYA_SYNP6</name>
<accession>Q5N5A3</accession>
<comment type="function">
    <text evidence="1">Catalyzes the four-electron reduction of biliverdin IX-alpha (2-electron reduction at both the A and D rings); the reaction proceeds via an isolatable 2-electron intermediate, 181,182-dihydrobiliverdin.</text>
</comment>
<comment type="catalytic activity">
    <reaction evidence="1">
        <text>(2R,3Z)-phycocyanobilin + 4 oxidized [2Fe-2S]-[ferredoxin] = biliverdin IXalpha + 4 reduced [2Fe-2S]-[ferredoxin] + 4 H(+)</text>
        <dbReference type="Rhea" id="RHEA:15309"/>
        <dbReference type="Rhea" id="RHEA-COMP:10000"/>
        <dbReference type="Rhea" id="RHEA-COMP:10001"/>
        <dbReference type="ChEBI" id="CHEBI:15378"/>
        <dbReference type="ChEBI" id="CHEBI:33737"/>
        <dbReference type="ChEBI" id="CHEBI:33738"/>
        <dbReference type="ChEBI" id="CHEBI:57437"/>
        <dbReference type="ChEBI" id="CHEBI:57991"/>
        <dbReference type="EC" id="1.3.7.5"/>
    </reaction>
</comment>
<comment type="similarity">
    <text evidence="1">Belongs to the HY2 family.</text>
</comment>
<evidence type="ECO:0000255" key="1">
    <source>
        <dbReference type="HAMAP-Rule" id="MF_00618"/>
    </source>
</evidence>
<dbReference type="EC" id="1.3.7.5" evidence="1"/>
<dbReference type="EMBL" id="AP008231">
    <property type="protein sequence ID" value="BAD78515.1"/>
    <property type="molecule type" value="Genomic_DNA"/>
</dbReference>
<dbReference type="RefSeq" id="WP_011242639.1">
    <property type="nucleotide sequence ID" value="NC_006576.1"/>
</dbReference>
<dbReference type="SMR" id="Q5N5A3"/>
<dbReference type="KEGG" id="syc:syc0325_d"/>
<dbReference type="eggNOG" id="ENOG502Z7RN">
    <property type="taxonomic scope" value="Bacteria"/>
</dbReference>
<dbReference type="Proteomes" id="UP000001175">
    <property type="component" value="Chromosome"/>
</dbReference>
<dbReference type="GO" id="GO:0050897">
    <property type="term" value="F:cobalt ion binding"/>
    <property type="evidence" value="ECO:0007669"/>
    <property type="project" value="InterPro"/>
</dbReference>
<dbReference type="GO" id="GO:0050620">
    <property type="term" value="F:phycocyanobilin:ferredoxin oxidoreductase activity"/>
    <property type="evidence" value="ECO:0007669"/>
    <property type="project" value="UniProtKB-UniRule"/>
</dbReference>
<dbReference type="GO" id="GO:0010024">
    <property type="term" value="P:phytochromobilin biosynthetic process"/>
    <property type="evidence" value="ECO:0007669"/>
    <property type="project" value="InterPro"/>
</dbReference>
<dbReference type="Gene3D" id="3.40.1500.20">
    <property type="match status" value="1"/>
</dbReference>
<dbReference type="HAMAP" id="MF_00618">
    <property type="entry name" value="Ferredoxin_bilin_red"/>
    <property type="match status" value="1"/>
</dbReference>
<dbReference type="InterPro" id="IPR009249">
    <property type="entry name" value="Ferredoxin-dep_bilin_Rdtase"/>
</dbReference>
<dbReference type="InterPro" id="IPR022870">
    <property type="entry name" value="Ferredoxin_bilin_OxRdtase"/>
</dbReference>
<dbReference type="NCBIfam" id="NF002760">
    <property type="entry name" value="PRK02816.1"/>
    <property type="match status" value="1"/>
</dbReference>
<dbReference type="PANTHER" id="PTHR34557">
    <property type="entry name" value="PHYTOCHROMOBILIN:FERREDOXIN OXIDOREDUCTASE, CHLOROPLASTIC"/>
    <property type="match status" value="1"/>
</dbReference>
<dbReference type="PANTHER" id="PTHR34557:SF1">
    <property type="entry name" value="PHYTOCHROMOBILIN:FERREDOXIN OXIDOREDUCTASE, CHLOROPLASTIC"/>
    <property type="match status" value="1"/>
</dbReference>
<dbReference type="Pfam" id="PF05996">
    <property type="entry name" value="Fe_bilin_red"/>
    <property type="match status" value="1"/>
</dbReference>
<proteinExistence type="inferred from homology"/>
<organism>
    <name type="scientific">Synechococcus sp. (strain ATCC 27144 / PCC 6301 / SAUG 1402/1)</name>
    <name type="common">Anacystis nidulans</name>
    <dbReference type="NCBI Taxonomy" id="269084"/>
    <lineage>
        <taxon>Bacteria</taxon>
        <taxon>Bacillati</taxon>
        <taxon>Cyanobacteriota</taxon>
        <taxon>Cyanophyceae</taxon>
        <taxon>Synechococcales</taxon>
        <taxon>Synechococcaceae</taxon>
        <taxon>Synechococcus</taxon>
    </lineage>
</organism>
<gene>
    <name evidence="1" type="primary">pcyA</name>
    <name type="ordered locus">syc0325_d</name>
</gene>